<name>PSBT_OENEH</name>
<accession>P69673</accession>
<accession>P37258</accession>
<accession>Q9MTJ6</accession>
<evidence type="ECO:0000255" key="1">
    <source>
        <dbReference type="HAMAP-Rule" id="MF_00808"/>
    </source>
</evidence>
<evidence type="ECO:0000305" key="2"/>
<reference key="1">
    <citation type="journal article" date="1990" name="Nucleic Acids Res.">
        <title>Nucleotide sequences of psbB and psbH, the plastid encoded genes for CP47 and the 10 kDa phosphoprotein of photosystem II in Oenothera hookeri and argillicola.</title>
        <authorList>
            <person name="Offermann-Steinhard K."/>
            <person name="Herrmann R.G."/>
        </authorList>
    </citation>
    <scope>NUCLEOTIDE SEQUENCE [GENOMIC DNA]</scope>
</reference>
<reference key="2">
    <citation type="journal article" date="2000" name="Mol. Gen. Genet.">
        <title>Complete nucleotide sequence of the Oenothera elata plastid chromosome, representing plastome I of the five distinguishable Euoenothera plastomes.</title>
        <authorList>
            <person name="Hupfer H."/>
            <person name="Swiatek M."/>
            <person name="Hornung S."/>
            <person name="Herrmann R.G."/>
            <person name="Maier R.M."/>
            <person name="Chiu W.-L."/>
            <person name="Sears B."/>
        </authorList>
    </citation>
    <scope>NUCLEOTIDE SEQUENCE [LARGE SCALE GENOMIC DNA]</scope>
    <source>
        <strain>cv. Johansen</strain>
    </source>
</reference>
<gene>
    <name evidence="1" type="primary">psbT</name>
    <name type="synonym">ycf8</name>
</gene>
<proteinExistence type="inferred from homology"/>
<dbReference type="EMBL" id="X55900">
    <property type="status" value="NOT_ANNOTATED_CDS"/>
    <property type="molecule type" value="Genomic_DNA"/>
</dbReference>
<dbReference type="EMBL" id="AJ271079">
    <property type="protein sequence ID" value="CAB67186.1"/>
    <property type="molecule type" value="Genomic_DNA"/>
</dbReference>
<dbReference type="RefSeq" id="NP_084720.1">
    <property type="nucleotide sequence ID" value="NC_002693.2"/>
</dbReference>
<dbReference type="SMR" id="P69673"/>
<dbReference type="GeneID" id="802778"/>
<dbReference type="GO" id="GO:0009535">
    <property type="term" value="C:chloroplast thylakoid membrane"/>
    <property type="evidence" value="ECO:0007669"/>
    <property type="project" value="UniProtKB-SubCell"/>
</dbReference>
<dbReference type="GO" id="GO:0009539">
    <property type="term" value="C:photosystem II reaction center"/>
    <property type="evidence" value="ECO:0007669"/>
    <property type="project" value="InterPro"/>
</dbReference>
<dbReference type="GO" id="GO:0015979">
    <property type="term" value="P:photosynthesis"/>
    <property type="evidence" value="ECO:0007669"/>
    <property type="project" value="UniProtKB-UniRule"/>
</dbReference>
<dbReference type="HAMAP" id="MF_00808">
    <property type="entry name" value="PSII_PsbT"/>
    <property type="match status" value="1"/>
</dbReference>
<dbReference type="InterPro" id="IPR001743">
    <property type="entry name" value="PSII_PsbT"/>
</dbReference>
<dbReference type="InterPro" id="IPR037268">
    <property type="entry name" value="PSII_PsbT_sf"/>
</dbReference>
<dbReference type="PANTHER" id="PTHR36411">
    <property type="match status" value="1"/>
</dbReference>
<dbReference type="PANTHER" id="PTHR36411:SF2">
    <property type="entry name" value="PHOTOSYSTEM II REACTION CENTER PROTEIN T"/>
    <property type="match status" value="1"/>
</dbReference>
<dbReference type="Pfam" id="PF01405">
    <property type="entry name" value="PsbT"/>
    <property type="match status" value="1"/>
</dbReference>
<dbReference type="SUPFAM" id="SSF161029">
    <property type="entry name" value="Photosystem II reaction center protein T, PsbT"/>
    <property type="match status" value="1"/>
</dbReference>
<sequence length="35" mass="4092">MEALVYTFLLVSTLGIIFFAIFFREPPKIQTKKTK</sequence>
<organism>
    <name type="scientific">Oenothera elata subsp. hookeri</name>
    <name type="common">Hooker's evening primrose</name>
    <name type="synonym">Oenothera hookeri</name>
    <dbReference type="NCBI Taxonomy" id="85636"/>
    <lineage>
        <taxon>Eukaryota</taxon>
        <taxon>Viridiplantae</taxon>
        <taxon>Streptophyta</taxon>
        <taxon>Embryophyta</taxon>
        <taxon>Tracheophyta</taxon>
        <taxon>Spermatophyta</taxon>
        <taxon>Magnoliopsida</taxon>
        <taxon>eudicotyledons</taxon>
        <taxon>Gunneridae</taxon>
        <taxon>Pentapetalae</taxon>
        <taxon>rosids</taxon>
        <taxon>malvids</taxon>
        <taxon>Myrtales</taxon>
        <taxon>Onagraceae</taxon>
        <taxon>Onagroideae</taxon>
        <taxon>Onagreae</taxon>
        <taxon>Oenothera</taxon>
    </lineage>
</organism>
<feature type="chain" id="PRO_0000217961" description="Photosystem II reaction center protein T">
    <location>
        <begin position="1"/>
        <end position="35"/>
    </location>
</feature>
<feature type="transmembrane region" description="Helical" evidence="1">
    <location>
        <begin position="3"/>
        <end position="23"/>
    </location>
</feature>
<feature type="sequence conflict" description="In Ref. 1; no nucleotide entry." evidence="2" ref="1">
    <original>KTK</original>
    <variation>RRNDF</variation>
    <location>
        <begin position="33"/>
        <end position="35"/>
    </location>
</feature>
<geneLocation type="chloroplast"/>
<protein>
    <recommendedName>
        <fullName evidence="1">Photosystem II reaction center protein T</fullName>
        <shortName evidence="1">PSII-T</shortName>
    </recommendedName>
</protein>
<comment type="function">
    <text evidence="1">Found at the monomer-monomer interface of the photosystem II (PS II) dimer, plays a role in assembly and dimerization of PSII. PSII is a light-driven water plastoquinone oxidoreductase, using light energy to abstract electrons from H(2)O, generating a proton gradient subsequently used for ATP formation.</text>
</comment>
<comment type="subunit">
    <text evidence="1">PSII is composed of 1 copy each of membrane proteins PsbA, PsbB, PsbC, PsbD, PsbE, PsbF, PsbH, PsbI, PsbJ, PsbK, PsbL, PsbM, PsbT, PsbY, PsbZ, Psb30/Ycf12, at least 3 peripheral proteins of the oxygen-evolving complex and a large number of cofactors. It forms dimeric complexes.</text>
</comment>
<comment type="subcellular location">
    <subcellularLocation>
        <location evidence="1">Plastid</location>
        <location evidence="1">Chloroplast thylakoid membrane</location>
        <topology evidence="1">Single-pass membrane protein</topology>
    </subcellularLocation>
</comment>
<comment type="similarity">
    <text evidence="1">Belongs to the PsbT family.</text>
</comment>
<keyword id="KW-0150">Chloroplast</keyword>
<keyword id="KW-0472">Membrane</keyword>
<keyword id="KW-0602">Photosynthesis</keyword>
<keyword id="KW-0604">Photosystem II</keyword>
<keyword id="KW-0934">Plastid</keyword>
<keyword id="KW-0793">Thylakoid</keyword>
<keyword id="KW-0812">Transmembrane</keyword>
<keyword id="KW-1133">Transmembrane helix</keyword>